<comment type="function">
    <text evidence="1">One of the primary rRNA binding proteins, it binds directly near the 3'-end of the 23S rRNA, where it nucleates assembly of the 50S subunit.</text>
</comment>
<comment type="subunit">
    <text evidence="1">Part of the 50S ribosomal subunit. Forms a cluster with proteins L14 and L19.</text>
</comment>
<comment type="PTM">
    <text evidence="1">Methylated by PrmB.</text>
</comment>
<comment type="similarity">
    <text evidence="1">Belongs to the universal ribosomal protein uL3 family.</text>
</comment>
<name>RL3_SHEB9</name>
<reference key="1">
    <citation type="submission" date="2007-11" db="EMBL/GenBank/DDBJ databases">
        <title>Complete sequence of chromosome of Shewanella baltica OS195.</title>
        <authorList>
            <consortium name="US DOE Joint Genome Institute"/>
            <person name="Copeland A."/>
            <person name="Lucas S."/>
            <person name="Lapidus A."/>
            <person name="Barry K."/>
            <person name="Glavina del Rio T."/>
            <person name="Dalin E."/>
            <person name="Tice H."/>
            <person name="Pitluck S."/>
            <person name="Chain P."/>
            <person name="Malfatti S."/>
            <person name="Shin M."/>
            <person name="Vergez L."/>
            <person name="Schmutz J."/>
            <person name="Larimer F."/>
            <person name="Land M."/>
            <person name="Hauser L."/>
            <person name="Kyrpides N."/>
            <person name="Kim E."/>
            <person name="Brettar I."/>
            <person name="Rodrigues J."/>
            <person name="Konstantinidis K."/>
            <person name="Klappenbach J."/>
            <person name="Hofle M."/>
            <person name="Tiedje J."/>
            <person name="Richardson P."/>
        </authorList>
    </citation>
    <scope>NUCLEOTIDE SEQUENCE [LARGE SCALE GENOMIC DNA]</scope>
    <source>
        <strain>OS195</strain>
    </source>
</reference>
<sequence length="212" mass="22648">MAIGLIGRKVGMTRIFTEDGVSIPVTVIEVAGNRVTQVKTLETDGYRALQVTTGTKKANRITKPEAGHFAKSGVEAGRGLWEMRLVDGEGEGIEVGAELNVDIFADVAKVDVTGQSKGKGFQGGVKRWNFRTQDMTHGNSLSHRSNGSIGQNQTPGRVFKGKKMSGHMGAERVTTQNLVVVRVDVERNLLLVRGAVPGATNGDLIIKPAVKA</sequence>
<gene>
    <name evidence="1" type="primary">rplC</name>
    <name type="ordered locus">Sbal195_0200</name>
</gene>
<dbReference type="EMBL" id="CP000891">
    <property type="protein sequence ID" value="ABX47382.1"/>
    <property type="molecule type" value="Genomic_DNA"/>
</dbReference>
<dbReference type="RefSeq" id="WP_006083600.1">
    <property type="nucleotide sequence ID" value="NC_009997.1"/>
</dbReference>
<dbReference type="SMR" id="A9KWA2"/>
<dbReference type="GeneID" id="11770559"/>
<dbReference type="KEGG" id="sbn:Sbal195_0200"/>
<dbReference type="HOGENOM" id="CLU_044142_4_1_6"/>
<dbReference type="Proteomes" id="UP000000770">
    <property type="component" value="Chromosome"/>
</dbReference>
<dbReference type="GO" id="GO:0022625">
    <property type="term" value="C:cytosolic large ribosomal subunit"/>
    <property type="evidence" value="ECO:0007669"/>
    <property type="project" value="TreeGrafter"/>
</dbReference>
<dbReference type="GO" id="GO:0019843">
    <property type="term" value="F:rRNA binding"/>
    <property type="evidence" value="ECO:0007669"/>
    <property type="project" value="UniProtKB-UniRule"/>
</dbReference>
<dbReference type="GO" id="GO:0003735">
    <property type="term" value="F:structural constituent of ribosome"/>
    <property type="evidence" value="ECO:0007669"/>
    <property type="project" value="InterPro"/>
</dbReference>
<dbReference type="GO" id="GO:0006412">
    <property type="term" value="P:translation"/>
    <property type="evidence" value="ECO:0007669"/>
    <property type="project" value="UniProtKB-UniRule"/>
</dbReference>
<dbReference type="FunFam" id="2.40.30.10:FF:000004">
    <property type="entry name" value="50S ribosomal protein L3"/>
    <property type="match status" value="1"/>
</dbReference>
<dbReference type="FunFam" id="3.30.160.810:FF:000001">
    <property type="entry name" value="50S ribosomal protein L3"/>
    <property type="match status" value="1"/>
</dbReference>
<dbReference type="Gene3D" id="3.30.160.810">
    <property type="match status" value="1"/>
</dbReference>
<dbReference type="Gene3D" id="2.40.30.10">
    <property type="entry name" value="Translation factors"/>
    <property type="match status" value="1"/>
</dbReference>
<dbReference type="HAMAP" id="MF_01325_B">
    <property type="entry name" value="Ribosomal_uL3_B"/>
    <property type="match status" value="1"/>
</dbReference>
<dbReference type="InterPro" id="IPR000597">
    <property type="entry name" value="Ribosomal_uL3"/>
</dbReference>
<dbReference type="InterPro" id="IPR019927">
    <property type="entry name" value="Ribosomal_uL3_bac/org-type"/>
</dbReference>
<dbReference type="InterPro" id="IPR019926">
    <property type="entry name" value="Ribosomal_uL3_CS"/>
</dbReference>
<dbReference type="InterPro" id="IPR009000">
    <property type="entry name" value="Transl_B-barrel_sf"/>
</dbReference>
<dbReference type="NCBIfam" id="TIGR03625">
    <property type="entry name" value="L3_bact"/>
    <property type="match status" value="1"/>
</dbReference>
<dbReference type="PANTHER" id="PTHR11229">
    <property type="entry name" value="50S RIBOSOMAL PROTEIN L3"/>
    <property type="match status" value="1"/>
</dbReference>
<dbReference type="PANTHER" id="PTHR11229:SF16">
    <property type="entry name" value="LARGE RIBOSOMAL SUBUNIT PROTEIN UL3C"/>
    <property type="match status" value="1"/>
</dbReference>
<dbReference type="Pfam" id="PF00297">
    <property type="entry name" value="Ribosomal_L3"/>
    <property type="match status" value="1"/>
</dbReference>
<dbReference type="SUPFAM" id="SSF50447">
    <property type="entry name" value="Translation proteins"/>
    <property type="match status" value="1"/>
</dbReference>
<dbReference type="PROSITE" id="PS00474">
    <property type="entry name" value="RIBOSOMAL_L3"/>
    <property type="match status" value="1"/>
</dbReference>
<feature type="chain" id="PRO_1000086459" description="Large ribosomal subunit protein uL3">
    <location>
        <begin position="1"/>
        <end position="212"/>
    </location>
</feature>
<feature type="region of interest" description="Disordered" evidence="2">
    <location>
        <begin position="136"/>
        <end position="155"/>
    </location>
</feature>
<feature type="modified residue" description="N5-methylglutamine" evidence="1">
    <location>
        <position position="153"/>
    </location>
</feature>
<proteinExistence type="inferred from homology"/>
<evidence type="ECO:0000255" key="1">
    <source>
        <dbReference type="HAMAP-Rule" id="MF_01325"/>
    </source>
</evidence>
<evidence type="ECO:0000256" key="2">
    <source>
        <dbReference type="SAM" id="MobiDB-lite"/>
    </source>
</evidence>
<evidence type="ECO:0000305" key="3"/>
<organism>
    <name type="scientific">Shewanella baltica (strain OS195)</name>
    <dbReference type="NCBI Taxonomy" id="399599"/>
    <lineage>
        <taxon>Bacteria</taxon>
        <taxon>Pseudomonadati</taxon>
        <taxon>Pseudomonadota</taxon>
        <taxon>Gammaproteobacteria</taxon>
        <taxon>Alteromonadales</taxon>
        <taxon>Shewanellaceae</taxon>
        <taxon>Shewanella</taxon>
    </lineage>
</organism>
<protein>
    <recommendedName>
        <fullName evidence="1">Large ribosomal subunit protein uL3</fullName>
    </recommendedName>
    <alternativeName>
        <fullName evidence="3">50S ribosomal protein L3</fullName>
    </alternativeName>
</protein>
<keyword id="KW-0488">Methylation</keyword>
<keyword id="KW-0687">Ribonucleoprotein</keyword>
<keyword id="KW-0689">Ribosomal protein</keyword>
<keyword id="KW-0694">RNA-binding</keyword>
<keyword id="KW-0699">rRNA-binding</keyword>
<accession>A9KWA2</accession>